<accession>Q6B8Y5</accession>
<name>PSBT_GRATL</name>
<gene>
    <name evidence="1" type="primary">psbT</name>
    <name type="ordered locus">Grc000069</name>
</gene>
<comment type="function">
    <text evidence="1">Found at the monomer-monomer interface of the photosystem II (PS II) dimer, plays a role in assembly and dimerization of PSII. PSII is a light-driven water plastoquinone oxidoreductase, using light energy to abstract electrons from H(2)O, generating a proton gradient subsequently used for ATP formation.</text>
</comment>
<comment type="subunit">
    <text evidence="1">PSII is composed of 1 copy each of membrane proteins PsbA, PsbB, PsbC, PsbD, PsbE, PsbF, PsbH, PsbI, PsbJ, PsbK, PsbL, PsbM, PsbT, PsbX, PsbY, PsbZ, Psb30/Ycf12, at least 3 peripheral proteins of the oxygen-evolving complex and a large number of cofactors. It forms dimeric complexes.</text>
</comment>
<comment type="subcellular location">
    <subcellularLocation>
        <location evidence="1">Plastid</location>
        <location evidence="1">Chloroplast thylakoid membrane</location>
        <topology evidence="1">Single-pass membrane protein</topology>
    </subcellularLocation>
</comment>
<comment type="similarity">
    <text evidence="1">Belongs to the PsbT family.</text>
</comment>
<proteinExistence type="inferred from homology"/>
<sequence>MEALVYVFLLVGTLMVIFFAIFFRDPPRIAK</sequence>
<keyword id="KW-0150">Chloroplast</keyword>
<keyword id="KW-0472">Membrane</keyword>
<keyword id="KW-0602">Photosynthesis</keyword>
<keyword id="KW-0604">Photosystem II</keyword>
<keyword id="KW-0934">Plastid</keyword>
<keyword id="KW-0793">Thylakoid</keyword>
<keyword id="KW-0812">Transmembrane</keyword>
<keyword id="KW-1133">Transmembrane helix</keyword>
<organism>
    <name type="scientific">Gracilaria tenuistipitata var. liui</name>
    <name type="common">Red alga</name>
    <dbReference type="NCBI Taxonomy" id="285951"/>
    <lineage>
        <taxon>Eukaryota</taxon>
        <taxon>Rhodophyta</taxon>
        <taxon>Florideophyceae</taxon>
        <taxon>Rhodymeniophycidae</taxon>
        <taxon>Gracilariales</taxon>
        <taxon>Gracilariaceae</taxon>
        <taxon>Gracilaria</taxon>
        <taxon>Gracilaria tenuistipitata</taxon>
    </lineage>
</organism>
<reference key="1">
    <citation type="journal article" date="2004" name="J. Mol. Evol.">
        <title>Comparative analysis of the complete plastid genome sequence of the red alga Gracilaria tenuistipitata var. liui provides insights into the evolution of rhodoplasts and their relationship to other plastids.</title>
        <authorList>
            <person name="Hagopian J.C."/>
            <person name="Reis M."/>
            <person name="Kitajima J.P."/>
            <person name="Bhattacharya D."/>
            <person name="de Oliveira M.C."/>
        </authorList>
    </citation>
    <scope>NUCLEOTIDE SEQUENCE [LARGE SCALE GENOMIC DNA]</scope>
</reference>
<evidence type="ECO:0000255" key="1">
    <source>
        <dbReference type="HAMAP-Rule" id="MF_00808"/>
    </source>
</evidence>
<dbReference type="EMBL" id="AY673996">
    <property type="protein sequence ID" value="AAT79650.1"/>
    <property type="molecule type" value="Genomic_DNA"/>
</dbReference>
<dbReference type="RefSeq" id="YP_063575.1">
    <property type="nucleotide sequence ID" value="NC_006137.1"/>
</dbReference>
<dbReference type="SMR" id="Q6B8Y5"/>
<dbReference type="GeneID" id="2944091"/>
<dbReference type="GO" id="GO:0009535">
    <property type="term" value="C:chloroplast thylakoid membrane"/>
    <property type="evidence" value="ECO:0007669"/>
    <property type="project" value="UniProtKB-SubCell"/>
</dbReference>
<dbReference type="GO" id="GO:0009539">
    <property type="term" value="C:photosystem II reaction center"/>
    <property type="evidence" value="ECO:0007669"/>
    <property type="project" value="InterPro"/>
</dbReference>
<dbReference type="GO" id="GO:0015979">
    <property type="term" value="P:photosynthesis"/>
    <property type="evidence" value="ECO:0007669"/>
    <property type="project" value="UniProtKB-UniRule"/>
</dbReference>
<dbReference type="HAMAP" id="MF_00808">
    <property type="entry name" value="PSII_PsbT"/>
    <property type="match status" value="1"/>
</dbReference>
<dbReference type="InterPro" id="IPR001743">
    <property type="entry name" value="PSII_PsbT"/>
</dbReference>
<dbReference type="InterPro" id="IPR037268">
    <property type="entry name" value="PSII_PsbT_sf"/>
</dbReference>
<dbReference type="PANTHER" id="PTHR36411">
    <property type="match status" value="1"/>
</dbReference>
<dbReference type="PANTHER" id="PTHR36411:SF2">
    <property type="entry name" value="PHOTOSYSTEM II REACTION CENTER PROTEIN T"/>
    <property type="match status" value="1"/>
</dbReference>
<dbReference type="Pfam" id="PF01405">
    <property type="entry name" value="PsbT"/>
    <property type="match status" value="1"/>
</dbReference>
<dbReference type="SUPFAM" id="SSF161029">
    <property type="entry name" value="Photosystem II reaction center protein T, PsbT"/>
    <property type="match status" value="1"/>
</dbReference>
<geneLocation type="chloroplast"/>
<feature type="chain" id="PRO_0000217934" description="Photosystem II reaction center protein T">
    <location>
        <begin position="1"/>
        <end position="31"/>
    </location>
</feature>
<feature type="transmembrane region" description="Helical" evidence="1">
    <location>
        <begin position="3"/>
        <end position="23"/>
    </location>
</feature>
<protein>
    <recommendedName>
        <fullName evidence="1">Photosystem II reaction center protein T</fullName>
        <shortName evidence="1">PSII-T</shortName>
    </recommendedName>
</protein>